<evidence type="ECO:0000255" key="1">
    <source>
        <dbReference type="PROSITE-ProRule" id="PRU00441"/>
    </source>
</evidence>
<evidence type="ECO:0000269" key="2">
    <source>
    </source>
</evidence>
<evidence type="ECO:0000305" key="3"/>
<comment type="function">
    <text>Part of a binding-protein-dependent transport system for taurine. Probably responsible for the translocation of the substrate across the membrane.</text>
</comment>
<comment type="subcellular location">
    <subcellularLocation>
        <location evidence="2">Cell inner membrane</location>
        <topology evidence="1 2">Multi-pass membrane protein</topology>
    </subcellularLocation>
</comment>
<comment type="similarity">
    <text evidence="3">Belongs to the binding-protein-dependent transport system permease family. CysTW subfamily.</text>
</comment>
<feature type="chain" id="PRO_0000060229" description="Taurine transport system permease protein TauC">
    <location>
        <begin position="1"/>
        <end position="275"/>
    </location>
</feature>
<feature type="transmembrane region" description="Helical" evidence="1">
    <location>
        <begin position="20"/>
        <end position="42"/>
    </location>
</feature>
<feature type="transmembrane region" description="Helical" evidence="1">
    <location>
        <begin position="87"/>
        <end position="107"/>
    </location>
</feature>
<feature type="transmembrane region" description="Helical" evidence="1">
    <location>
        <begin position="124"/>
        <end position="144"/>
    </location>
</feature>
<feature type="transmembrane region" description="Helical" evidence="1">
    <location>
        <begin position="146"/>
        <end position="166"/>
    </location>
</feature>
<feature type="transmembrane region" description="Helical" evidence="1">
    <location>
        <begin position="186"/>
        <end position="206"/>
    </location>
</feature>
<feature type="transmembrane region" description="Helical" evidence="1">
    <location>
        <begin position="209"/>
        <end position="229"/>
    </location>
</feature>
<feature type="transmembrane region" description="Helical" evidence="1">
    <location>
        <begin position="236"/>
        <end position="256"/>
    </location>
</feature>
<feature type="domain" description="ABC transmembrane type-1" evidence="1">
    <location>
        <begin position="80"/>
        <end position="264"/>
    </location>
</feature>
<feature type="sequence conflict" description="In Ref. 1; BAA12840." evidence="3" ref="1">
    <original>A</original>
    <variation>R</variation>
    <location>
        <position position="74"/>
    </location>
</feature>
<keyword id="KW-0997">Cell inner membrane</keyword>
<keyword id="KW-1003">Cell membrane</keyword>
<keyword id="KW-0472">Membrane</keyword>
<keyword id="KW-1185">Reference proteome</keyword>
<keyword id="KW-0812">Transmembrane</keyword>
<keyword id="KW-1133">Transmembrane helix</keyword>
<keyword id="KW-0813">Transport</keyword>
<organism>
    <name type="scientific">Escherichia coli (strain K12)</name>
    <dbReference type="NCBI Taxonomy" id="83333"/>
    <lineage>
        <taxon>Bacteria</taxon>
        <taxon>Pseudomonadati</taxon>
        <taxon>Pseudomonadota</taxon>
        <taxon>Gammaproteobacteria</taxon>
        <taxon>Enterobacterales</taxon>
        <taxon>Enterobacteriaceae</taxon>
        <taxon>Escherichia</taxon>
    </lineage>
</organism>
<name>TAUC_ECOLI</name>
<protein>
    <recommendedName>
        <fullName>Taurine transport system permease protein TauC</fullName>
    </recommendedName>
</protein>
<gene>
    <name type="primary">tauC</name>
    <name type="synonym">ssiC</name>
    <name type="synonym">yaiJ</name>
    <name type="ordered locus">b0367</name>
    <name type="ordered locus">JW0359</name>
</gene>
<accession>Q47539</accession>
<accession>P77160</accession>
<accession>Q2MC58</accession>
<proteinExistence type="inferred from homology"/>
<reference key="1">
    <citation type="journal article" date="1996" name="J. Bacteriol.">
        <title>Identification of sulfate starvation-regulated genes in Escherichia coli: a gene cluster involved in the utilization of taurine as a sulfur source.</title>
        <authorList>
            <person name="van der Ploeg J.R."/>
            <person name="Weiss M.A."/>
            <person name="Saller E."/>
            <person name="Nashimoto H."/>
            <person name="Saito N."/>
            <person name="Kertesz M.A."/>
            <person name="Leisinger T."/>
        </authorList>
    </citation>
    <scope>NUCLEOTIDE SEQUENCE [GENOMIC DNA]</scope>
    <source>
        <strain>K12</strain>
    </source>
</reference>
<reference key="2">
    <citation type="submission" date="1997-01" db="EMBL/GenBank/DDBJ databases">
        <title>Sequence of minutes 4-25 of Escherichia coli.</title>
        <authorList>
            <person name="Chung E."/>
            <person name="Allen E."/>
            <person name="Araujo R."/>
            <person name="Aparicio A.M."/>
            <person name="Davis K."/>
            <person name="Duncan M."/>
            <person name="Federspiel N."/>
            <person name="Hyman R."/>
            <person name="Kalman S."/>
            <person name="Komp C."/>
            <person name="Kurdi O."/>
            <person name="Lew H."/>
            <person name="Lin D."/>
            <person name="Namath A."/>
            <person name="Oefner P."/>
            <person name="Roberts D."/>
            <person name="Schramm S."/>
            <person name="Davis R.W."/>
        </authorList>
    </citation>
    <scope>NUCLEOTIDE SEQUENCE [LARGE SCALE GENOMIC DNA]</scope>
    <source>
        <strain>K12 / MG1655 / ATCC 47076</strain>
    </source>
</reference>
<reference key="3">
    <citation type="journal article" date="1997" name="Science">
        <title>The complete genome sequence of Escherichia coli K-12.</title>
        <authorList>
            <person name="Blattner F.R."/>
            <person name="Plunkett G. III"/>
            <person name="Bloch C.A."/>
            <person name="Perna N.T."/>
            <person name="Burland V."/>
            <person name="Riley M."/>
            <person name="Collado-Vides J."/>
            <person name="Glasner J.D."/>
            <person name="Rode C.K."/>
            <person name="Mayhew G.F."/>
            <person name="Gregor J."/>
            <person name="Davis N.W."/>
            <person name="Kirkpatrick H.A."/>
            <person name="Goeden M.A."/>
            <person name="Rose D.J."/>
            <person name="Mau B."/>
            <person name="Shao Y."/>
        </authorList>
    </citation>
    <scope>NUCLEOTIDE SEQUENCE [LARGE SCALE GENOMIC DNA]</scope>
    <source>
        <strain>K12 / MG1655 / ATCC 47076</strain>
    </source>
</reference>
<reference key="4">
    <citation type="journal article" date="2006" name="Mol. Syst. Biol.">
        <title>Highly accurate genome sequences of Escherichia coli K-12 strains MG1655 and W3110.</title>
        <authorList>
            <person name="Hayashi K."/>
            <person name="Morooka N."/>
            <person name="Yamamoto Y."/>
            <person name="Fujita K."/>
            <person name="Isono K."/>
            <person name="Choi S."/>
            <person name="Ohtsubo E."/>
            <person name="Baba T."/>
            <person name="Wanner B.L."/>
            <person name="Mori H."/>
            <person name="Horiuchi T."/>
        </authorList>
    </citation>
    <scope>NUCLEOTIDE SEQUENCE [LARGE SCALE GENOMIC DNA]</scope>
    <source>
        <strain>K12 / W3110 / ATCC 27325 / DSM 5911</strain>
    </source>
</reference>
<reference key="5">
    <citation type="journal article" date="2005" name="Science">
        <title>Global topology analysis of the Escherichia coli inner membrane proteome.</title>
        <authorList>
            <person name="Daley D.O."/>
            <person name="Rapp M."/>
            <person name="Granseth E."/>
            <person name="Melen K."/>
            <person name="Drew D."/>
            <person name="von Heijne G."/>
        </authorList>
    </citation>
    <scope>SUBCELLULAR LOCATION</scope>
    <source>
        <strain>K12 / MG1655 / ATCC 47076</strain>
    </source>
</reference>
<sequence>MSVLINEKLHSRRLKWRWPLSRQVTLSIGTLAVLLTVWWTVATLQLISPLFLPPPQQVLEKLLTIAGPQGFMDATLWQHLAASLTRIMLALFAAVLFGIPVGIAMGLSPTVRGILDPIIELYRPVPPLAYLPLMVIWFGIGETSKILLIYLAIFAPVAMSALAGVKSVQQVRIRAAQSLGASRAQVLWFVILPGALPEILTGLRIGLGVGWSTLVAAELIAATRGLGFMVQSAGEFLATDVVLAGIAVIAIIAFLLELGLRALQRRLTPWHGEVQ</sequence>
<dbReference type="EMBL" id="D85613">
    <property type="protein sequence ID" value="BAA12840.1"/>
    <property type="molecule type" value="Genomic_DNA"/>
</dbReference>
<dbReference type="EMBL" id="U73857">
    <property type="protein sequence ID" value="AAB18090.1"/>
    <property type="molecule type" value="Genomic_DNA"/>
</dbReference>
<dbReference type="EMBL" id="U00096">
    <property type="protein sequence ID" value="AAC73470.1"/>
    <property type="molecule type" value="Genomic_DNA"/>
</dbReference>
<dbReference type="EMBL" id="AP009048">
    <property type="protein sequence ID" value="BAE76148.1"/>
    <property type="molecule type" value="Genomic_DNA"/>
</dbReference>
<dbReference type="PIR" id="S78606">
    <property type="entry name" value="S78606"/>
</dbReference>
<dbReference type="RefSeq" id="NP_414901.1">
    <property type="nucleotide sequence ID" value="NC_000913.3"/>
</dbReference>
<dbReference type="RefSeq" id="WP_000114620.1">
    <property type="nucleotide sequence ID" value="NZ_SSZK01000009.1"/>
</dbReference>
<dbReference type="SMR" id="Q47539"/>
<dbReference type="BioGRID" id="4259823">
    <property type="interactions" value="7"/>
</dbReference>
<dbReference type="ComplexPortal" id="CPX-4312">
    <property type="entry name" value="Taurine ABC transporter complex"/>
</dbReference>
<dbReference type="FunCoup" id="Q47539">
    <property type="interactions" value="557"/>
</dbReference>
<dbReference type="STRING" id="511145.b0367"/>
<dbReference type="TCDB" id="3.A.1.17.1">
    <property type="family name" value="the atp-binding cassette (abc) superfamily"/>
</dbReference>
<dbReference type="PaxDb" id="511145-b0367"/>
<dbReference type="EnsemblBacteria" id="AAC73470">
    <property type="protein sequence ID" value="AAC73470"/>
    <property type="gene ID" value="b0367"/>
</dbReference>
<dbReference type="GeneID" id="945026"/>
<dbReference type="KEGG" id="ecj:JW0359"/>
<dbReference type="KEGG" id="eco:b0367"/>
<dbReference type="PATRIC" id="fig|1411691.4.peg.1912"/>
<dbReference type="EchoBASE" id="EB3086"/>
<dbReference type="eggNOG" id="COG0600">
    <property type="taxonomic scope" value="Bacteria"/>
</dbReference>
<dbReference type="HOGENOM" id="CLU_046113_1_0_6"/>
<dbReference type="InParanoid" id="Q47539"/>
<dbReference type="OMA" id="LIEFYRP"/>
<dbReference type="OrthoDB" id="8138334at2"/>
<dbReference type="PhylomeDB" id="Q47539"/>
<dbReference type="BioCyc" id="EcoCyc:TAUC-MONOMER"/>
<dbReference type="BioCyc" id="MetaCyc:TAUC-MONOMER"/>
<dbReference type="PRO" id="PR:Q47539"/>
<dbReference type="Proteomes" id="UP000000625">
    <property type="component" value="Chromosome"/>
</dbReference>
<dbReference type="GO" id="GO:0055052">
    <property type="term" value="C:ATP-binding cassette (ABC) transporter complex, substrate-binding subunit-containing"/>
    <property type="evidence" value="ECO:0000303"/>
    <property type="project" value="ComplexPortal"/>
</dbReference>
<dbReference type="GO" id="GO:0016020">
    <property type="term" value="C:membrane"/>
    <property type="evidence" value="ECO:0000303"/>
    <property type="project" value="ComplexPortal"/>
</dbReference>
<dbReference type="GO" id="GO:0005886">
    <property type="term" value="C:plasma membrane"/>
    <property type="evidence" value="ECO:0000314"/>
    <property type="project" value="EcoCyc"/>
</dbReference>
<dbReference type="GO" id="GO:0010438">
    <property type="term" value="P:cellular response to sulfur starvation"/>
    <property type="evidence" value="ECO:0000270"/>
    <property type="project" value="EcoCyc"/>
</dbReference>
<dbReference type="GO" id="GO:0015734">
    <property type="term" value="P:taurine transmembrane transport"/>
    <property type="evidence" value="ECO:0000269"/>
    <property type="project" value="EcoCyc"/>
</dbReference>
<dbReference type="CDD" id="cd06261">
    <property type="entry name" value="TM_PBP2"/>
    <property type="match status" value="1"/>
</dbReference>
<dbReference type="FunFam" id="1.10.3720.10:FF:000003">
    <property type="entry name" value="Aliphatic sulfonate ABC transporter permease"/>
    <property type="match status" value="1"/>
</dbReference>
<dbReference type="Gene3D" id="1.10.3720.10">
    <property type="entry name" value="MetI-like"/>
    <property type="match status" value="1"/>
</dbReference>
<dbReference type="InterPro" id="IPR000515">
    <property type="entry name" value="MetI-like"/>
</dbReference>
<dbReference type="InterPro" id="IPR035906">
    <property type="entry name" value="MetI-like_sf"/>
</dbReference>
<dbReference type="NCBIfam" id="NF007545">
    <property type="entry name" value="PRK10160.1"/>
    <property type="match status" value="1"/>
</dbReference>
<dbReference type="PANTHER" id="PTHR30151">
    <property type="entry name" value="ALKANE SULFONATE ABC TRANSPORTER-RELATED, MEMBRANE SUBUNIT"/>
    <property type="match status" value="1"/>
</dbReference>
<dbReference type="PANTHER" id="PTHR30151:SF25">
    <property type="entry name" value="TAURINE TRANSPORT SYSTEM PERMEASE PROTEIN TAUC"/>
    <property type="match status" value="1"/>
</dbReference>
<dbReference type="Pfam" id="PF00528">
    <property type="entry name" value="BPD_transp_1"/>
    <property type="match status" value="1"/>
</dbReference>
<dbReference type="SUPFAM" id="SSF161098">
    <property type="entry name" value="MetI-like"/>
    <property type="match status" value="1"/>
</dbReference>
<dbReference type="PROSITE" id="PS50928">
    <property type="entry name" value="ABC_TM1"/>
    <property type="match status" value="1"/>
</dbReference>